<gene>
    <name evidence="1" type="primary">smpB</name>
    <name type="ordered locus">LBL_2001</name>
</gene>
<keyword id="KW-0963">Cytoplasm</keyword>
<keyword id="KW-0694">RNA-binding</keyword>
<sequence>MANKKEEPGHSPLVNKKAKFNFELVSFIEAGIVLSGSEVKSLREKKGNLTDAFAKIKNGEVFLENFSITPYKNGGYVNHPEIRPRKLLLHKKEIEKLERQVKEKGLVLVATKVYFKNNLRVKVEIAVGKPKKIHDKRDDMQKKDAQQEIARALKSSNRYE</sequence>
<feature type="chain" id="PRO_1000002078" description="SsrA-binding protein">
    <location>
        <begin position="1"/>
        <end position="160"/>
    </location>
</feature>
<feature type="region of interest" description="Disordered" evidence="2">
    <location>
        <begin position="132"/>
        <end position="160"/>
    </location>
</feature>
<feature type="compositionally biased region" description="Basic and acidic residues" evidence="2">
    <location>
        <begin position="135"/>
        <end position="146"/>
    </location>
</feature>
<protein>
    <recommendedName>
        <fullName evidence="1">SsrA-binding protein</fullName>
    </recommendedName>
    <alternativeName>
        <fullName evidence="1">Small protein B</fullName>
    </alternativeName>
</protein>
<organism>
    <name type="scientific">Leptospira borgpetersenii serovar Hardjo-bovis (strain L550)</name>
    <dbReference type="NCBI Taxonomy" id="355276"/>
    <lineage>
        <taxon>Bacteria</taxon>
        <taxon>Pseudomonadati</taxon>
        <taxon>Spirochaetota</taxon>
        <taxon>Spirochaetia</taxon>
        <taxon>Leptospirales</taxon>
        <taxon>Leptospiraceae</taxon>
        <taxon>Leptospira</taxon>
    </lineage>
</organism>
<proteinExistence type="inferred from homology"/>
<evidence type="ECO:0000255" key="1">
    <source>
        <dbReference type="HAMAP-Rule" id="MF_00023"/>
    </source>
</evidence>
<evidence type="ECO:0000256" key="2">
    <source>
        <dbReference type="SAM" id="MobiDB-lite"/>
    </source>
</evidence>
<reference key="1">
    <citation type="journal article" date="2006" name="Proc. Natl. Acad. Sci. U.S.A.">
        <title>Genome reduction in Leptospira borgpetersenii reflects limited transmission potential.</title>
        <authorList>
            <person name="Bulach D.M."/>
            <person name="Zuerner R.L."/>
            <person name="Wilson P."/>
            <person name="Seemann T."/>
            <person name="McGrath A."/>
            <person name="Cullen P.A."/>
            <person name="Davis J."/>
            <person name="Johnson M."/>
            <person name="Kuczek E."/>
            <person name="Alt D.P."/>
            <person name="Peterson-Burch B."/>
            <person name="Coppel R.L."/>
            <person name="Rood J.I."/>
            <person name="Davies J.K."/>
            <person name="Adler B."/>
        </authorList>
    </citation>
    <scope>NUCLEOTIDE SEQUENCE [LARGE SCALE GENOMIC DNA]</scope>
    <source>
        <strain>L550</strain>
    </source>
</reference>
<accession>Q04ZS0</accession>
<name>SSRP_LEPBL</name>
<comment type="function">
    <text evidence="1">Required for rescue of stalled ribosomes mediated by trans-translation. Binds to transfer-messenger RNA (tmRNA), required for stable association of tmRNA with ribosomes. tmRNA and SmpB together mimic tRNA shape, replacing the anticodon stem-loop with SmpB. tmRNA is encoded by the ssrA gene; the 2 termini fold to resemble tRNA(Ala) and it encodes a 'tag peptide', a short internal open reading frame. During trans-translation Ala-aminoacylated tmRNA acts like a tRNA, entering the A-site of stalled ribosomes, displacing the stalled mRNA. The ribosome then switches to translate the ORF on the tmRNA; the nascent peptide is terminated with the 'tag peptide' encoded by the tmRNA and targeted for degradation. The ribosome is freed to recommence translation, which seems to be the essential function of trans-translation.</text>
</comment>
<comment type="subcellular location">
    <subcellularLocation>
        <location evidence="1">Cytoplasm</location>
    </subcellularLocation>
    <text evidence="1">The tmRNA-SmpB complex associates with stalled 70S ribosomes.</text>
</comment>
<comment type="similarity">
    <text evidence="1">Belongs to the SmpB family.</text>
</comment>
<dbReference type="EMBL" id="CP000348">
    <property type="protein sequence ID" value="ABJ79425.1"/>
    <property type="molecule type" value="Genomic_DNA"/>
</dbReference>
<dbReference type="RefSeq" id="WP_011670499.1">
    <property type="nucleotide sequence ID" value="NC_008508.1"/>
</dbReference>
<dbReference type="SMR" id="Q04ZS0"/>
<dbReference type="KEGG" id="lbl:LBL_2001"/>
<dbReference type="HOGENOM" id="CLU_108953_0_1_12"/>
<dbReference type="GO" id="GO:0005829">
    <property type="term" value="C:cytosol"/>
    <property type="evidence" value="ECO:0007669"/>
    <property type="project" value="TreeGrafter"/>
</dbReference>
<dbReference type="GO" id="GO:0003723">
    <property type="term" value="F:RNA binding"/>
    <property type="evidence" value="ECO:0007669"/>
    <property type="project" value="UniProtKB-UniRule"/>
</dbReference>
<dbReference type="GO" id="GO:0070929">
    <property type="term" value="P:trans-translation"/>
    <property type="evidence" value="ECO:0007669"/>
    <property type="project" value="UniProtKB-UniRule"/>
</dbReference>
<dbReference type="CDD" id="cd09294">
    <property type="entry name" value="SmpB"/>
    <property type="match status" value="1"/>
</dbReference>
<dbReference type="Gene3D" id="2.40.280.10">
    <property type="match status" value="1"/>
</dbReference>
<dbReference type="HAMAP" id="MF_00023">
    <property type="entry name" value="SmpB"/>
    <property type="match status" value="1"/>
</dbReference>
<dbReference type="InterPro" id="IPR023620">
    <property type="entry name" value="SmpB"/>
</dbReference>
<dbReference type="InterPro" id="IPR000037">
    <property type="entry name" value="SsrA-bd_prot"/>
</dbReference>
<dbReference type="InterPro" id="IPR020081">
    <property type="entry name" value="SsrA-bd_prot_CS"/>
</dbReference>
<dbReference type="NCBIfam" id="NF003843">
    <property type="entry name" value="PRK05422.1"/>
    <property type="match status" value="1"/>
</dbReference>
<dbReference type="NCBIfam" id="TIGR00086">
    <property type="entry name" value="smpB"/>
    <property type="match status" value="1"/>
</dbReference>
<dbReference type="PANTHER" id="PTHR30308:SF2">
    <property type="entry name" value="SSRA-BINDING PROTEIN"/>
    <property type="match status" value="1"/>
</dbReference>
<dbReference type="PANTHER" id="PTHR30308">
    <property type="entry name" value="TMRNA-BINDING COMPONENT OF TRANS-TRANSLATION TAGGING COMPLEX"/>
    <property type="match status" value="1"/>
</dbReference>
<dbReference type="Pfam" id="PF01668">
    <property type="entry name" value="SmpB"/>
    <property type="match status" value="1"/>
</dbReference>
<dbReference type="SUPFAM" id="SSF74982">
    <property type="entry name" value="Small protein B (SmpB)"/>
    <property type="match status" value="1"/>
</dbReference>
<dbReference type="PROSITE" id="PS01317">
    <property type="entry name" value="SSRP"/>
    <property type="match status" value="1"/>
</dbReference>